<feature type="chain" id="PRO_0000387672" description="Acetaldehyde dehydrogenase">
    <location>
        <begin position="1"/>
        <end position="298"/>
    </location>
</feature>
<feature type="active site" description="Acyl-thioester intermediate" evidence="1">
    <location>
        <position position="121"/>
    </location>
</feature>
<feature type="binding site" evidence="1">
    <location>
        <begin position="6"/>
        <end position="9"/>
    </location>
    <ligand>
        <name>NAD(+)</name>
        <dbReference type="ChEBI" id="CHEBI:57540"/>
    </ligand>
</feature>
<feature type="binding site" evidence="1">
    <location>
        <begin position="152"/>
        <end position="160"/>
    </location>
    <ligand>
        <name>NAD(+)</name>
        <dbReference type="ChEBI" id="CHEBI:57540"/>
    </ligand>
</feature>
<feature type="binding site" evidence="1">
    <location>
        <position position="271"/>
    </location>
    <ligand>
        <name>NAD(+)</name>
        <dbReference type="ChEBI" id="CHEBI:57540"/>
    </ligand>
</feature>
<reference key="1">
    <citation type="submission" date="2006-10" db="EMBL/GenBank/DDBJ databases">
        <authorList>
            <person name="Fleischmann R.D."/>
            <person name="Dodson R.J."/>
            <person name="Haft D.H."/>
            <person name="Merkel J.S."/>
            <person name="Nelson W.C."/>
            <person name="Fraser C.M."/>
        </authorList>
    </citation>
    <scope>NUCLEOTIDE SEQUENCE [LARGE SCALE GENOMIC DNA]</scope>
    <source>
        <strain>104</strain>
    </source>
</reference>
<sequence>MAIVGSGNISTDLLYKLLRSDWLEPRWMVGIDPQSEGLARARKLGLETTHEGVDWLLAQPEKPDLVFEATSAYVHRDAAPKYEAAGIRAIDLTPAAVGPAVIPPANLRQHLDAPNVNMITCGGQATIPIVYAVSRVVEVPYAEIVASVASVSAGPGTRANIDEFTKTTSRGVETIGGAKRGKAIIILNPADPPMIMRDTIFCAIPEDADRDAIAQSIHDVVKEVQSYVPGYRLLNEPQFDDPSLNSGGQALVTTFVEVEGAGDYLPPYAGNLDIMTAAATKVGEEIAKETLSVAGGTR</sequence>
<comment type="catalytic activity">
    <reaction evidence="1">
        <text>acetaldehyde + NAD(+) + CoA = acetyl-CoA + NADH + H(+)</text>
        <dbReference type="Rhea" id="RHEA:23288"/>
        <dbReference type="ChEBI" id="CHEBI:15343"/>
        <dbReference type="ChEBI" id="CHEBI:15378"/>
        <dbReference type="ChEBI" id="CHEBI:57287"/>
        <dbReference type="ChEBI" id="CHEBI:57288"/>
        <dbReference type="ChEBI" id="CHEBI:57540"/>
        <dbReference type="ChEBI" id="CHEBI:57945"/>
        <dbReference type="EC" id="1.2.1.10"/>
    </reaction>
</comment>
<comment type="similarity">
    <text evidence="1">Belongs to the acetaldehyde dehydrogenase family.</text>
</comment>
<proteinExistence type="inferred from homology"/>
<keyword id="KW-0058">Aromatic hydrocarbons catabolism</keyword>
<keyword id="KW-0520">NAD</keyword>
<keyword id="KW-0560">Oxidoreductase</keyword>
<organism>
    <name type="scientific">Mycobacterium avium (strain 104)</name>
    <dbReference type="NCBI Taxonomy" id="243243"/>
    <lineage>
        <taxon>Bacteria</taxon>
        <taxon>Bacillati</taxon>
        <taxon>Actinomycetota</taxon>
        <taxon>Actinomycetes</taxon>
        <taxon>Mycobacteriales</taxon>
        <taxon>Mycobacteriaceae</taxon>
        <taxon>Mycobacterium</taxon>
        <taxon>Mycobacterium avium complex (MAC)</taxon>
    </lineage>
</organism>
<protein>
    <recommendedName>
        <fullName evidence="1">Acetaldehyde dehydrogenase</fullName>
        <ecNumber evidence="1">1.2.1.10</ecNumber>
    </recommendedName>
    <alternativeName>
        <fullName evidence="1">Acetaldehyde dehydrogenase [acetylating]</fullName>
    </alternativeName>
</protein>
<dbReference type="EC" id="1.2.1.10" evidence="1"/>
<dbReference type="EMBL" id="CP000479">
    <property type="protein sequence ID" value="ABK65233.1"/>
    <property type="molecule type" value="Genomic_DNA"/>
</dbReference>
<dbReference type="SMR" id="A0QAG8"/>
<dbReference type="KEGG" id="mav:MAV_0626"/>
<dbReference type="HOGENOM" id="CLU_062208_0_0_11"/>
<dbReference type="Proteomes" id="UP000001574">
    <property type="component" value="Chromosome"/>
</dbReference>
<dbReference type="GO" id="GO:0008774">
    <property type="term" value="F:acetaldehyde dehydrogenase (acetylating) activity"/>
    <property type="evidence" value="ECO:0007669"/>
    <property type="project" value="UniProtKB-UniRule"/>
</dbReference>
<dbReference type="GO" id="GO:0051287">
    <property type="term" value="F:NAD binding"/>
    <property type="evidence" value="ECO:0007669"/>
    <property type="project" value="UniProtKB-UniRule"/>
</dbReference>
<dbReference type="GO" id="GO:0009056">
    <property type="term" value="P:catabolic process"/>
    <property type="evidence" value="ECO:0007669"/>
    <property type="project" value="UniProtKB-KW"/>
</dbReference>
<dbReference type="CDD" id="cd23933">
    <property type="entry name" value="ALDH_C"/>
    <property type="match status" value="1"/>
</dbReference>
<dbReference type="Gene3D" id="3.30.360.10">
    <property type="entry name" value="Dihydrodipicolinate Reductase, domain 2"/>
    <property type="match status" value="1"/>
</dbReference>
<dbReference type="Gene3D" id="3.40.50.720">
    <property type="entry name" value="NAD(P)-binding Rossmann-like Domain"/>
    <property type="match status" value="1"/>
</dbReference>
<dbReference type="HAMAP" id="MF_01657">
    <property type="entry name" value="Ac_ald_DH_ac"/>
    <property type="match status" value="1"/>
</dbReference>
<dbReference type="InterPro" id="IPR003361">
    <property type="entry name" value="Acetaldehyde_dehydrogenase"/>
</dbReference>
<dbReference type="InterPro" id="IPR015426">
    <property type="entry name" value="Acetylaldehyde_DH_C"/>
</dbReference>
<dbReference type="InterPro" id="IPR036291">
    <property type="entry name" value="NAD(P)-bd_dom_sf"/>
</dbReference>
<dbReference type="InterPro" id="IPR000534">
    <property type="entry name" value="Semialdehyde_DH_NAD-bd"/>
</dbReference>
<dbReference type="NCBIfam" id="TIGR03215">
    <property type="entry name" value="ac_ald_DH_ac"/>
    <property type="match status" value="1"/>
</dbReference>
<dbReference type="NCBIfam" id="NF006157">
    <property type="entry name" value="PRK08300.1"/>
    <property type="match status" value="1"/>
</dbReference>
<dbReference type="Pfam" id="PF09290">
    <property type="entry name" value="AcetDehyd-dimer"/>
    <property type="match status" value="1"/>
</dbReference>
<dbReference type="PIRSF" id="PIRSF015689">
    <property type="entry name" value="Actaldh_dh_actl"/>
    <property type="match status" value="1"/>
</dbReference>
<dbReference type="SMART" id="SM00859">
    <property type="entry name" value="Semialdhyde_dh"/>
    <property type="match status" value="1"/>
</dbReference>
<dbReference type="SUPFAM" id="SSF55347">
    <property type="entry name" value="Glyceraldehyde-3-phosphate dehydrogenase-like, C-terminal domain"/>
    <property type="match status" value="1"/>
</dbReference>
<dbReference type="SUPFAM" id="SSF51735">
    <property type="entry name" value="NAD(P)-binding Rossmann-fold domains"/>
    <property type="match status" value="1"/>
</dbReference>
<accession>A0QAG8</accession>
<evidence type="ECO:0000255" key="1">
    <source>
        <dbReference type="HAMAP-Rule" id="MF_01657"/>
    </source>
</evidence>
<name>ACDH_MYCA1</name>
<gene>
    <name type="ordered locus">MAV_0626</name>
</gene>